<reference key="1">
    <citation type="journal article" date="2000" name="DNA Res.">
        <title>Complete structure of the chloroplast genome of a legume, Lotus japonicus.</title>
        <authorList>
            <person name="Kato T."/>
            <person name="Kaneko T."/>
            <person name="Sato S."/>
            <person name="Nakamura Y."/>
            <person name="Tabata S."/>
        </authorList>
    </citation>
    <scope>NUCLEOTIDE SEQUENCE [LARGE SCALE GENOMIC DNA]</scope>
    <source>
        <strain>cv. Miyakojima MG-20</strain>
    </source>
</reference>
<name>PETD_LOTJA</name>
<feature type="chain" id="PRO_0000061866" description="Cytochrome b6-f complex subunit 4">
    <location>
        <begin position="1"/>
        <end position="160"/>
    </location>
</feature>
<feature type="transmembrane region" description="Helical" evidence="2">
    <location>
        <begin position="36"/>
        <end position="56"/>
    </location>
</feature>
<feature type="transmembrane region" description="Helical" evidence="2">
    <location>
        <begin position="95"/>
        <end position="115"/>
    </location>
</feature>
<feature type="transmembrane region" description="Helical" evidence="2">
    <location>
        <begin position="131"/>
        <end position="151"/>
    </location>
</feature>
<comment type="function">
    <text evidence="2">Component of the cytochrome b6-f complex, which mediates electron transfer between photosystem II (PSII) and photosystem I (PSI), cyclic electron flow around PSI, and state transitions.</text>
</comment>
<comment type="subunit">
    <text evidence="1">The 4 large subunits of the cytochrome b6-f complex are cytochrome b6, subunit IV (17 kDa polypeptide, petD), cytochrome f and the Rieske protein, while the 4 small subunits are petG, petL, petM and petN. The complex functions as a dimer (By similarity).</text>
</comment>
<comment type="subcellular location">
    <subcellularLocation>
        <location evidence="2">Plastid</location>
        <location evidence="2">Chloroplast thylakoid membrane</location>
        <topology evidence="2">Multi-pass membrane protein</topology>
    </subcellularLocation>
</comment>
<comment type="similarity">
    <text evidence="2">Belongs to the cytochrome b family. PetD subfamily.</text>
</comment>
<geneLocation type="chloroplast"/>
<proteinExistence type="inferred from homology"/>
<sequence length="160" mass="17475">MGVTKKPDLNDPVLRAKLAKGMGHNYYGEPAWPNDLLYIFPVVILGTIACNVGLAVLEPSMIGEPADPFATPLEILPEWYFFPVFQILRTVPNKLLGVLLMVSVPAGLVTVPFLENVNKFQNPFRRPVATTVFLIGTAVSLWLGIGATLPIEKSLTLGLF</sequence>
<evidence type="ECO:0000250" key="1"/>
<evidence type="ECO:0000255" key="2">
    <source>
        <dbReference type="HAMAP-Rule" id="MF_01344"/>
    </source>
</evidence>
<gene>
    <name evidence="2" type="primary">petD</name>
</gene>
<protein>
    <recommendedName>
        <fullName evidence="2">Cytochrome b6-f complex subunit 4</fullName>
    </recommendedName>
    <alternativeName>
        <fullName evidence="2">17 kDa polypeptide</fullName>
    </alternativeName>
</protein>
<accession>Q9BBQ5</accession>
<keyword id="KW-0150">Chloroplast</keyword>
<keyword id="KW-0249">Electron transport</keyword>
<keyword id="KW-0472">Membrane</keyword>
<keyword id="KW-0602">Photosynthesis</keyword>
<keyword id="KW-0934">Plastid</keyword>
<keyword id="KW-0793">Thylakoid</keyword>
<keyword id="KW-0812">Transmembrane</keyword>
<keyword id="KW-1133">Transmembrane helix</keyword>
<keyword id="KW-0813">Transport</keyword>
<organism>
    <name type="scientific">Lotus japonicus</name>
    <name type="common">Lotus corniculatus var. japonicus</name>
    <dbReference type="NCBI Taxonomy" id="34305"/>
    <lineage>
        <taxon>Eukaryota</taxon>
        <taxon>Viridiplantae</taxon>
        <taxon>Streptophyta</taxon>
        <taxon>Embryophyta</taxon>
        <taxon>Tracheophyta</taxon>
        <taxon>Spermatophyta</taxon>
        <taxon>Magnoliopsida</taxon>
        <taxon>eudicotyledons</taxon>
        <taxon>Gunneridae</taxon>
        <taxon>Pentapetalae</taxon>
        <taxon>rosids</taxon>
        <taxon>fabids</taxon>
        <taxon>Fabales</taxon>
        <taxon>Fabaceae</taxon>
        <taxon>Papilionoideae</taxon>
        <taxon>50 kb inversion clade</taxon>
        <taxon>NPAAA clade</taxon>
        <taxon>Hologalegina</taxon>
        <taxon>robinioid clade</taxon>
        <taxon>Loteae</taxon>
        <taxon>Lotus</taxon>
    </lineage>
</organism>
<dbReference type="EMBL" id="AP002983">
    <property type="protein sequence ID" value="BAB33227.1"/>
    <property type="molecule type" value="Genomic_DNA"/>
</dbReference>
<dbReference type="RefSeq" id="NP_084828.1">
    <property type="nucleotide sequence ID" value="NC_002694.1"/>
</dbReference>
<dbReference type="SMR" id="Q9BBQ5"/>
<dbReference type="GeneID" id="802874"/>
<dbReference type="GO" id="GO:0009535">
    <property type="term" value="C:chloroplast thylakoid membrane"/>
    <property type="evidence" value="ECO:0007669"/>
    <property type="project" value="UniProtKB-SubCell"/>
</dbReference>
<dbReference type="GO" id="GO:0005739">
    <property type="term" value="C:mitochondrion"/>
    <property type="evidence" value="ECO:0007669"/>
    <property type="project" value="GOC"/>
</dbReference>
<dbReference type="GO" id="GO:0045158">
    <property type="term" value="F:electron transporter, transferring electrons within cytochrome b6/f complex of photosystem II activity"/>
    <property type="evidence" value="ECO:0007669"/>
    <property type="project" value="UniProtKB-UniRule"/>
</dbReference>
<dbReference type="GO" id="GO:0045156">
    <property type="term" value="F:electron transporter, transferring electrons within the cyclic electron transport pathway of photosynthesis activity"/>
    <property type="evidence" value="ECO:0007669"/>
    <property type="project" value="InterPro"/>
</dbReference>
<dbReference type="GO" id="GO:0008121">
    <property type="term" value="F:ubiquinol-cytochrome-c reductase activity"/>
    <property type="evidence" value="ECO:0007669"/>
    <property type="project" value="TreeGrafter"/>
</dbReference>
<dbReference type="GO" id="GO:0006122">
    <property type="term" value="P:mitochondrial electron transport, ubiquinol to cytochrome c"/>
    <property type="evidence" value="ECO:0007669"/>
    <property type="project" value="TreeGrafter"/>
</dbReference>
<dbReference type="GO" id="GO:0009767">
    <property type="term" value="P:photosynthetic electron transport chain"/>
    <property type="evidence" value="ECO:0007669"/>
    <property type="project" value="InterPro"/>
</dbReference>
<dbReference type="CDD" id="cd00290">
    <property type="entry name" value="cytochrome_b_C"/>
    <property type="match status" value="1"/>
</dbReference>
<dbReference type="FunFam" id="1.10.287.980:FF:000001">
    <property type="entry name" value="Cytochrome b6-f complex subunit 4"/>
    <property type="match status" value="1"/>
</dbReference>
<dbReference type="FunFam" id="1.20.5.510:FF:000002">
    <property type="entry name" value="Cytochrome b6-f complex subunit 4"/>
    <property type="match status" value="1"/>
</dbReference>
<dbReference type="Gene3D" id="1.10.287.980">
    <property type="entry name" value="plastocyanin oxidoreductase"/>
    <property type="match status" value="1"/>
</dbReference>
<dbReference type="Gene3D" id="1.20.5.510">
    <property type="entry name" value="Single helix bin"/>
    <property type="match status" value="1"/>
</dbReference>
<dbReference type="HAMAP" id="MF_01344">
    <property type="entry name" value="Cytb6_f_subIV"/>
    <property type="match status" value="1"/>
</dbReference>
<dbReference type="InterPro" id="IPR005798">
    <property type="entry name" value="Cyt_b/b6_C"/>
</dbReference>
<dbReference type="InterPro" id="IPR036150">
    <property type="entry name" value="Cyt_b/b6_C_sf"/>
</dbReference>
<dbReference type="InterPro" id="IPR005870">
    <property type="entry name" value="Cyt_b6/f_cplx_suIV"/>
</dbReference>
<dbReference type="InterPro" id="IPR048260">
    <property type="entry name" value="Cytochrome_b_C_euk/bac"/>
</dbReference>
<dbReference type="NCBIfam" id="TIGR01156">
    <property type="entry name" value="cytb6_f_IV"/>
    <property type="match status" value="1"/>
</dbReference>
<dbReference type="PANTHER" id="PTHR19271">
    <property type="entry name" value="CYTOCHROME B"/>
    <property type="match status" value="1"/>
</dbReference>
<dbReference type="PANTHER" id="PTHR19271:SF41">
    <property type="entry name" value="CYTOCHROME B_B6 C-TERMINAL REGION PROFILE DOMAIN-CONTAINING PROTEIN"/>
    <property type="match status" value="1"/>
</dbReference>
<dbReference type="Pfam" id="PF00032">
    <property type="entry name" value="Cytochrom_B_C"/>
    <property type="match status" value="1"/>
</dbReference>
<dbReference type="PIRSF" id="PIRSF000033">
    <property type="entry name" value="B6f_17K"/>
    <property type="match status" value="1"/>
</dbReference>
<dbReference type="SUPFAM" id="SSF81648">
    <property type="entry name" value="a domain/subunit of cytochrome bc1 complex (Ubiquinol-cytochrome c reductase)"/>
    <property type="match status" value="1"/>
</dbReference>
<dbReference type="PROSITE" id="PS51003">
    <property type="entry name" value="CYTB_CTER"/>
    <property type="match status" value="1"/>
</dbReference>